<proteinExistence type="evidence at protein level"/>
<sequence>MPLFKRRDGSGPAPNATIREKYDFRDVLGTGAFSKVFLAESKSDAGQMYAVKCIDKKALKGKEESLENEIKVLRKLRHNNIVQLFDTYDEKQFVYLVMELVTGGELFDRIVAKGSYTEQDASNLIRQVLEAVGFMHDNGVVHRDLKPENLLYYNQDEDSKIMISDFGLSKTEDSGVMATACGTPGYVAPEVLQQKPYGKAVDVWSIGVIAYILLCGYPPFYDESDANLFAQIIKGEYEFDAPYWDQISDSAKDFITHLMCCDPEARFTCQDALSHPWISGNTAYTHDIHGTVAVHLKKSLAKRNWKKAYNAAAAIRQLQMLRLSSNSNRLQKQASQQQPEPPTPAFHA</sequence>
<accession>Q9TXJ0</accession>
<accession>Q6V5R5</accession>
<accession>Q9UAH6</accession>
<gene>
    <name evidence="25" type="primary">cmk-1</name>
    <name evidence="25" type="ORF">K07A9.2</name>
</gene>
<comment type="function">
    <text evidence="7 8 9 10 11 12 13 14 15 16 17 18 19 20">Calcium/calmodulin-dependent protein kinase that operates in the calcium-triggered CaMKK-CaMK1 signaling cascade which results in transcriptional activation (PubMed:10428833, PubMed:12231504, PubMed:26725111). Transcriptional activation occurs at least in part through phosphorylation of crh-1 (PubMed:10428833, PubMed:12231504). Regulates gene expression, sensory morphology, and function of the AFD thermosensory neurons (PubMed:10428833, PubMed:14711416, PubMed:25467978, PubMed:34766550). Involved in long-term adaptation of AFD neurons to temperatures warmer than the initial acclimatized cultivation temperature (PubMed:25467978). Acts in the FLP thermal nociceptors to moderate the responsiveness to noxious heat and controls neuropeptide release from FLP neurons in response to temperature elevations (PubMed:25467982, PubMed:34766550, PubMed:37166173). Regulates the dauer decision, the decision of the larvae to enter into the alternative stress-resistant and long-lived dauer developmental stage, based on the feeding state, primarily in the AWC sensory neurons. Acts non cell-autonomously in the AWC neurons to regulate expression of the daf-28 insulin-like peptide and cell-autonomously in the ASI sensory neurons to regulate expression of the growth promoting daf-7 in a food-regulated manner (PubMed:26335407). Plays a role in memory-based thermal response of an individual AFD neuron cell (PubMed:26725111). Influences habituation and sensitivity to repeated mechanosensory stimuli (PubMed:30429311). Involved in chemotaxis response in AWC neurons to attractant 2-heptanone, a volatile organic compound emitted by the nematode pathogenic bacterium B.nematocida B16 (PubMed:27660389). Acts in the ASE salt-sensing neurons to promote a type of aversive gustatory-associated learning called salt-avoidance learning via regulation of crh-1 signaling and the promotion of long-term memory formation, but is not involved in salt attraction (PubMed:29875264, PubMed:30779740). Represses transcription of glutamate receptor glr-1 in the nucleus basally and in response to changes in synaptic activity (PubMed:27462879).</text>
</comment>
<comment type="catalytic activity">
    <reaction evidence="7 8 13">
        <text>L-seryl-[protein] + ATP = O-phospho-L-seryl-[protein] + ADP + H(+)</text>
        <dbReference type="Rhea" id="RHEA:17989"/>
        <dbReference type="Rhea" id="RHEA-COMP:9863"/>
        <dbReference type="Rhea" id="RHEA-COMP:11604"/>
        <dbReference type="ChEBI" id="CHEBI:15378"/>
        <dbReference type="ChEBI" id="CHEBI:29999"/>
        <dbReference type="ChEBI" id="CHEBI:30616"/>
        <dbReference type="ChEBI" id="CHEBI:83421"/>
        <dbReference type="ChEBI" id="CHEBI:456216"/>
        <dbReference type="EC" id="2.7.11.17"/>
    </reaction>
</comment>
<comment type="catalytic activity">
    <reaction evidence="7 8 13">
        <text>L-threonyl-[protein] + ATP = O-phospho-L-threonyl-[protein] + ADP + H(+)</text>
        <dbReference type="Rhea" id="RHEA:46608"/>
        <dbReference type="Rhea" id="RHEA-COMP:11060"/>
        <dbReference type="Rhea" id="RHEA-COMP:11605"/>
        <dbReference type="ChEBI" id="CHEBI:15378"/>
        <dbReference type="ChEBI" id="CHEBI:30013"/>
        <dbReference type="ChEBI" id="CHEBI:30616"/>
        <dbReference type="ChEBI" id="CHEBI:61977"/>
        <dbReference type="ChEBI" id="CHEBI:456216"/>
        <dbReference type="EC" id="2.7.11.17"/>
    </reaction>
</comment>
<comment type="cofactor">
    <cofactor evidence="7 8">
        <name>Mg(2+)</name>
        <dbReference type="ChEBI" id="CHEBI:18420"/>
    </cofactor>
</comment>
<comment type="activity regulation">
    <text evidence="7 13">Activated by Ca(2+)/calmodulin (PubMed:10428833, PubMed:26725111). Binding of calmodulin results in a conformational change that generates functional binding sites for both substrate and ATP, and thus relieves autoinhibition and lowers the Km of substrate binding. Must be phosphorylated by ckk-1 to be maximally active but this does not appear to be required for activity in AFD neurons (PubMed:10428833).</text>
</comment>
<comment type="biophysicochemical properties">
    <kinetics>
        <KM evidence="7">657 uM for syntide-2 (when cmk-1 is not phosphorylated on Thr-179)</KM>
        <KM evidence="7">20 uM for syntide-2 (when cmk-1 is phosphorylated on Thr-179)</KM>
        <Vmax evidence="7">0.1 mmol/min/mg enzyme (irrespective of phosphorylation status of Thr-179)</Vmax>
    </kinetics>
</comment>
<comment type="subunit">
    <text evidence="19">Interacts with importin ima-3; affinity for ima-3 is increased in the presence of Ca(2+) and calmodulin and leads to increased nuclear accumulation of cmk-1 in FLP neurons upon prolonged heat activation.</text>
</comment>
<comment type="subcellular location">
    <subcellularLocation>
        <location evidence="7 10 11 12 14 19 20">Nucleus</location>
    </subcellularLocation>
    <subcellularLocation>
        <location evidence="10 11 12 14 16 19 20">Cytoplasm</location>
    </subcellularLocation>
    <text evidence="10 11 12 14 16 19 20">Localization is regulated by temperature in thermosensory neurons (PubMed:25467978, PubMed:25467982). Localizes to the nucleus upon elevated temperature shift (PubMed:25467978). Translocates from cytoplasm to the nucleus of FLP thermal nociceptors during thermal adaptation (PubMed:25467982). Localizes to the nucleus when incubated at 15 degrees Celsius but is cytoplasmic in AFD neurons when conditioned at 25 degrees Celsius; in FLP neurons, it localizes to the cytoplasm at 20 degrees Celsius and translocates to the nucleus when incubated at 28 degrees Celsius (PubMed:34766550). Localizes to the cytoplasm of ASE neurons before salt conditioning but the subcellular location does not influence salt-avoidance learning (PubMed:29875264). Nuclear accumulation is induced by elevated Ca(2+) and calmodulin in both FLP and AFD neurons (PubMed:34766550). Translocates transiently from cytoplasm to the nucleus, in AWC sensory neurons in response to food withdrawal, and in FLP neurons as a result of phosphorylation by ckk-1 or binding of Ca(2+) and calmodulin upon prolonged heat activation (PubMed:26335407, PubMed:37166173). Prolonged starvation results in cytoplasmic enrichment (PubMed:26335407). The distribution between cytoplasm and nucleus is regulated by synaptic glutamate receptor glr-1 levels in PVC neurons, accumulating in the nucleus with increasing glr-1 (PubMed:27462879).</text>
</comment>
<comment type="tissue specificity">
    <text evidence="8 11 16 17 19 20">Expressed in head and tail neurons and vulval muscles (PubMed:12231504). Throughout the nervous system. Detected in neurites and neuronal cell bodies (PubMed:25467982). Expressed in the mechanosensory neurons, AVM and ALM, and in the interneurons, AVA, AVB and AVD (PubMed:30429311). Expressed in the right and left ASE neurons where it functions cell-autonomously to control salt-avoidance learning (PubMed:29875264). Expressed in FLP and AFD thermosensory neurons (PubMed:34766550, PubMed:37166173).</text>
</comment>
<comment type="domain">
    <text evidence="2">The autoinhibitory domain overlaps with the calmodulin binding region and interacts in the inactive folded state with the catalytic domain as a pseudosubstrate.</text>
</comment>
<comment type="domain">
    <text evidence="19">Nuclear export signal is required for cytoplasmic accumulation in unstimulated FLP neurons which occurs in an exportin-dependent manner.</text>
</comment>
<comment type="domain">
    <text evidence="19">Nuclear localization signal 2 is unmasked by high intracellular Ca(2+) levels and binding of Ca(2+) and calmodulin to cmk-1, increasing cmk-1 affinity for importin ima-3 and promoting nuclear accumulation.</text>
</comment>
<comment type="PTM">
    <text evidence="20">Phosphorylation at Thr-179 can promote both nuclear export and import, sustaining nucleocytoplasmic shuttling.</text>
</comment>
<comment type="disruption phenotype">
    <text evidence="7 9 10 11 12 13 14 16 19">Changes in thermosensory behavior and temperature-dependent defects in AFD-specific gene expression (PubMed:10428833, PubMed:14711416, PubMed:25467978, PubMed:26725111). Decreased threshold for temperature-evoked activity in the AFD neurons. Defects in negative thermotaxis and isothermal tracking behaviors (PubMed:25467978). Defective in thermal avoidance adaptation. Aberrant thermotaxis at innocuous temperatures (PubMed:25467982). Inappropriate dauer formation under well-fed conditions. Reduced expression of growth promoting daf-7 in ASI sensory neurons (PubMed:26335407). Changes in thermosensory response of AIY neurons (PubMed:26725111). Increases response to acute thermosensory stimuli (PubMed:34766550). Shows defect in salt-avoidance learning where worms do not avoid high salt environment after salt conditioning due to low salt-induced calcium signals in ASE dendrites and axons (PubMed:29875264). Increased transcription of glutamate receptor glr-1 (PubMed:27462879).</text>
</comment>
<comment type="similarity">
    <text evidence="3">Belongs to the protein kinase superfamily. CAMK Ser/Thr protein kinase family. CaMK subfamily.</text>
</comment>
<evidence type="ECO:0000250" key="1">
    <source>
        <dbReference type="UniProtKB" id="P28523"/>
    </source>
</evidence>
<evidence type="ECO:0000250" key="2">
    <source>
        <dbReference type="UniProtKB" id="Q63450"/>
    </source>
</evidence>
<evidence type="ECO:0000255" key="3"/>
<evidence type="ECO:0000255" key="4">
    <source>
        <dbReference type="PROSITE-ProRule" id="PRU00159"/>
    </source>
</evidence>
<evidence type="ECO:0000255" key="5">
    <source>
        <dbReference type="PROSITE-ProRule" id="PRU10027"/>
    </source>
</evidence>
<evidence type="ECO:0000256" key="6">
    <source>
        <dbReference type="SAM" id="MobiDB-lite"/>
    </source>
</evidence>
<evidence type="ECO:0000269" key="7">
    <source>
    </source>
</evidence>
<evidence type="ECO:0000269" key="8">
    <source>
    </source>
</evidence>
<evidence type="ECO:0000269" key="9">
    <source>
    </source>
</evidence>
<evidence type="ECO:0000269" key="10">
    <source>
    </source>
</evidence>
<evidence type="ECO:0000269" key="11">
    <source>
    </source>
</evidence>
<evidence type="ECO:0000269" key="12">
    <source>
    </source>
</evidence>
<evidence type="ECO:0000269" key="13">
    <source>
    </source>
</evidence>
<evidence type="ECO:0000269" key="14">
    <source>
    </source>
</evidence>
<evidence type="ECO:0000269" key="15">
    <source>
    </source>
</evidence>
<evidence type="ECO:0000269" key="16">
    <source>
    </source>
</evidence>
<evidence type="ECO:0000269" key="17">
    <source>
    </source>
</evidence>
<evidence type="ECO:0000269" key="18">
    <source>
    </source>
</evidence>
<evidence type="ECO:0000269" key="19">
    <source>
    </source>
</evidence>
<evidence type="ECO:0000269" key="20">
    <source>
    </source>
</evidence>
<evidence type="ECO:0000303" key="21">
    <source>
    </source>
</evidence>
<evidence type="ECO:0000305" key="22"/>
<evidence type="ECO:0000312" key="23">
    <source>
        <dbReference type="EMBL" id="AAQ54691.1"/>
    </source>
</evidence>
<evidence type="ECO:0000312" key="24">
    <source>
        <dbReference type="EMBL" id="BAA82674.1"/>
    </source>
</evidence>
<evidence type="ECO:0000312" key="25">
    <source>
        <dbReference type="WormBase" id="K07A9.2"/>
    </source>
</evidence>
<feature type="chain" id="PRO_0000395335" description="Calcium/calmodulin-dependent protein kinase type 1">
    <location>
        <begin position="1"/>
        <end position="348"/>
    </location>
</feature>
<feature type="domain" description="Protein kinase" evidence="4">
    <location>
        <begin position="22"/>
        <end position="278"/>
    </location>
</feature>
<feature type="region of interest" description="Autoinhibitory domain" evidence="2">
    <location>
        <begin position="278"/>
        <end position="318"/>
    </location>
</feature>
<feature type="region of interest" description="Calmodulin-binding" evidence="2">
    <location>
        <begin position="298"/>
        <end position="319"/>
    </location>
</feature>
<feature type="region of interest" description="Disordered" evidence="6">
    <location>
        <begin position="327"/>
        <end position="348"/>
    </location>
</feature>
<feature type="short sequence motif" description="Nuclear localization signal 1" evidence="7">
    <location>
        <begin position="7"/>
        <end position="22"/>
    </location>
</feature>
<feature type="short sequence motif" description="Nuclear localization signal 2" evidence="19">
    <location>
        <begin position="71"/>
        <end position="78"/>
    </location>
</feature>
<feature type="short sequence motif" description="Nuclear export sequence" evidence="19">
    <location>
        <begin position="288"/>
        <end position="294"/>
    </location>
</feature>
<feature type="short sequence motif" description="Nuclear localization signal 3" evidence="19 20">
    <location>
        <begin position="297"/>
        <end position="307"/>
    </location>
</feature>
<feature type="compositionally biased region" description="Polar residues" evidence="6">
    <location>
        <begin position="327"/>
        <end position="338"/>
    </location>
</feature>
<feature type="compositionally biased region" description="Pro residues" evidence="6">
    <location>
        <begin position="339"/>
        <end position="348"/>
    </location>
</feature>
<feature type="active site" description="Proton acceptor" evidence="1 4 5">
    <location>
        <position position="144"/>
    </location>
</feature>
<feature type="binding site" evidence="1 4">
    <location>
        <begin position="28"/>
        <end position="36"/>
    </location>
    <ligand>
        <name>ATP</name>
        <dbReference type="ChEBI" id="CHEBI:30616"/>
    </ligand>
</feature>
<feature type="binding site" evidence="1 4">
    <location>
        <position position="52"/>
    </location>
    <ligand>
        <name>ATP</name>
        <dbReference type="ChEBI" id="CHEBI:30616"/>
    </ligand>
</feature>
<feature type="modified residue" description="Phosphothreonine; by ckk-1" evidence="7 20">
    <location>
        <position position="179"/>
    </location>
</feature>
<feature type="mutagenesis site" description="Loss of nuclear localization." evidence="7">
    <location>
        <begin position="2"/>
        <end position="7"/>
    </location>
</feature>
<feature type="mutagenesis site" description="Loss of function in cytoplasm and nucleus in FLP thermal nociceptors but no effect on temperature-dependent translocation from cytoplasm to the nucleus. Increased transcription of glutamate receptor glr-1. Inactive; fails to rescue salt-avoidance learning defect in cmk-1 mutants." evidence="11 14 16">
    <original>K</original>
    <variation>A</variation>
    <location>
        <position position="52"/>
    </location>
</feature>
<feature type="mutagenesis site" description="Loss of kinase activity." evidence="13">
    <original>K</original>
    <variation>M</variation>
    <location>
        <position position="52"/>
    </location>
</feature>
<feature type="mutagenesis site" description="Partially impairs nuclear relocalization in FLP neurons at 28 degrees Celsius but does not alter baseline cytoplasmic expression at 20 degrees Celsius. Abolishes nuclear translocation and reduces the affinity for importin ima-3; when associated with Q-74 and S-77." evidence="19">
    <original>K</original>
    <variation>A</variation>
    <location>
        <position position="71"/>
    </location>
</feature>
<feature type="mutagenesis site" description="Partially impairs nuclear relocalization in FLP neurons at 28 degrees Celsius but does not alter baseline cytoplasmic expression at 20 degrees Celsius. Abolishes nuclear translocation and reduces the affinity for importin ima-3; when associated with A-71 and S-77." evidence="19">
    <original>R</original>
    <variation>Q</variation>
    <location>
        <position position="74"/>
    </location>
</feature>
<feature type="mutagenesis site" description="Abolishes nuclear relocalization in FLP neurons at 28 degrees Celsius but does not alter baseline cytoplasmic expression at 20 degrees Celsius. In contrast to the wild-type, does not reduce reversal response upon prolonged exposure to 28 degrees Celsius. Abolishes nuclear translocation and reduces the affinity for importin ima-3; when associated with A-71 and Q-74." evidence="19">
    <original>R</original>
    <variation>S</variation>
    <location>
        <position position="77"/>
    </location>
</feature>
<feature type="mutagenesis site" description="In oy21; shows age-dependent naive touch response phenotype, where tap-induced reversal distance increases with age. Habituates faster to short-span mechanosensory stimulus but slower to long-span stimulation, in contrast to the wild-type. Reverses faster and for a longer duration than the wild-type." evidence="17 19">
    <location>
        <begin position="127"/>
        <end position="348"/>
    </location>
</feature>
<feature type="mutagenesis site" description="Loss of phosphorylation and activation by ckk-1. No effect on function in AFD neurons. Strongly enriched in the cytoplasm regardless of cultivation temperature. Fails to rescue the AFD thermosensory neuron defects of cmk-1 null mutant. Loss of temperature-dependent translocation from cytoplasm to the nucleus during heat acclimation in FLP thermal nociceptors. Fails to rescue salt-avoidance learning defect in cmk-1 mutants. Prevents nuclear localization in unc-68(dom13) background mutant. Abolishes nuclear accumulation irrespective of temperature; alone and when associated with S-305." evidence="7 9 10 11 16 20">
    <original>T</original>
    <variation>A</variation>
    <location>
        <position position="179"/>
    </location>
</feature>
<feature type="mutagenesis site" description="Increases basal kinase activity. In FLP neurons; slightly favors nuclear accumulation in the absence of heat stimulation. Promotes nuclear export in a NES-dependent manner. Favors nuclear localization; when associated with S-305." evidence="7 9 20">
    <original>T</original>
    <variation>D</variation>
    <location>
        <position position="179"/>
    </location>
</feature>
<feature type="mutagenesis site" description="Has a larger response to mechanosensory stimulation than the wild-type." evidence="17">
    <original>T</original>
    <variation>I</variation>
    <location>
        <position position="179"/>
    </location>
</feature>
<feature type="mutagenesis site" description="Prevents cytoplasmic expression yielding nuclear accumulation in FLP neurons." evidence="19">
    <location>
        <begin position="288"/>
        <end position="294"/>
    </location>
</feature>
<feature type="mutagenesis site" description="Causes locomotion defects with a tendency to coil and reverse. Reduces heat responsiveness and prevents cytoplasmic expression in FLP and AFD neurons yielding nuclear accumulation; when associated with A-294. Cytoplasmic in FLP neurons; when associated with A-294 and S-305." evidence="19">
    <original>V</original>
    <variation>A</variation>
    <location>
        <position position="292"/>
    </location>
</feature>
<feature type="mutagenesis site" description="Causes locomotion defects with a tendency to coil and reverse. Reduces heat responsiveness and prevents cytoplasmic expression in FLP and AFD neurons yielding nuclear accumulation; when associated with A-292. Cytoplasmic in FLP neurons; when associated with A-292 and S-305." evidence="19">
    <original>V</original>
    <variation>A</variation>
    <location>
        <position position="294"/>
    </location>
</feature>
<feature type="mutagenesis site" description="Partially impairs nuclear relocalization in FLP neurons at prolonged exposure to 28 degrees Celsius but does not alter baseline cytoplasmic expression at 20 degrees Celsius; when associated with Q-307." evidence="19">
    <original>K</original>
    <variation>S</variation>
    <location>
        <position position="302"/>
    </location>
</feature>
<feature type="mutagenesis site" description="In FLP neurons; prevents the binding of Ca(2+) and calmodulin, thereby inhibiting nuclear translocation at 28 degrees Celsius. Prevents nuclear accumulation in unc-68 background mutant that has permanently elevated calcium levels. Cytoplasmic in FLP neurons; when associated with A-292 and A-294. Abolishes nuclear accumulation irrespective of temperature; alone and when associated with A-179 or D-179." evidence="19 20">
    <original>W</original>
    <variation>S</variation>
    <location>
        <position position="305"/>
    </location>
</feature>
<feature type="mutagenesis site" description="Partially impairs nuclear relocalization in FLP neurons at 28 degrees Celsius but does not alter baseline cytoplasmic expression at 20 degrees Celsius; alone and when associated with S-302." evidence="19">
    <original>K</original>
    <variation>Q</variation>
    <location>
        <position position="307"/>
    </location>
</feature>
<feature type="mutagenesis site" description="Does not affect nuclear accumulation in FLP neurons." evidence="19 20">
    <location>
        <begin position="315"/>
        <end position="323"/>
    </location>
</feature>
<feature type="mutagenesis site" description="Does not affect nuclear accumulation in FLP neurons; alone and when associated with A-321 and A-323." evidence="19">
    <original>I</original>
    <variation>A</variation>
    <location>
        <position position="315"/>
    </location>
</feature>
<feature type="mutagenesis site" description="Does not affect nuclear accumulation in FLP neurons." evidence="19">
    <location>
        <begin position="318"/>
        <end position="324"/>
    </location>
</feature>
<feature type="mutagenesis site" description="Does not affect nuclear accumulation in FLP neurons; when associated with only A-323 or A-315 and A-323." evidence="19">
    <original>L</original>
    <variation>A</variation>
    <location>
        <position position="321"/>
    </location>
</feature>
<feature type="mutagenesis site" description="Does not affect nuclear accumulation in FLP neurons; when associated with only A-321 or A-315 and A-321." evidence="19">
    <original>L</original>
    <variation>A</variation>
    <location>
        <position position="323"/>
    </location>
</feature>
<feature type="mutagenesis site" description="In FLP neurons; causes nuclear localization irrespective of temperature." evidence="20">
    <original>S</original>
    <variation>A</variation>
    <location>
        <position position="325"/>
    </location>
</feature>
<feature type="mutagenesis site" description="In FLP neurons; does not affect nucleocytoplasmic localization." evidence="20">
    <original>S</original>
    <variation>D</variation>
    <location>
        <position position="325"/>
    </location>
</feature>
<feature type="sequence conflict" description="In Ref. 1; BAA82674." evidence="22" ref="1">
    <original>D</original>
    <variation>G</variation>
    <location>
        <position position="249"/>
    </location>
</feature>
<name>CMK1_CAEEL</name>
<dbReference type="EC" id="2.7.11.17" evidence="7 8 13"/>
<dbReference type="EMBL" id="AB021864">
    <property type="protein sequence ID" value="BAA82674.1"/>
    <property type="molecule type" value="mRNA"/>
</dbReference>
<dbReference type="EMBL" id="BX284604">
    <property type="protein sequence ID" value="CCD71865.1"/>
    <property type="molecule type" value="Genomic_DNA"/>
</dbReference>
<dbReference type="EMBL" id="AY350451">
    <property type="protein sequence ID" value="AAQ54691.1"/>
    <property type="molecule type" value="mRNA"/>
</dbReference>
<dbReference type="RefSeq" id="NP_500139.1">
    <property type="nucleotide sequence ID" value="NM_067738.8"/>
</dbReference>
<dbReference type="SMR" id="Q9TXJ0"/>
<dbReference type="BioGRID" id="42145">
    <property type="interactions" value="5"/>
</dbReference>
<dbReference type="DIP" id="DIP-26403N"/>
<dbReference type="FunCoup" id="Q9TXJ0">
    <property type="interactions" value="757"/>
</dbReference>
<dbReference type="IntAct" id="Q9TXJ0">
    <property type="interactions" value="1"/>
</dbReference>
<dbReference type="STRING" id="6239.K07A9.2.1"/>
<dbReference type="iPTMnet" id="Q9TXJ0"/>
<dbReference type="PaxDb" id="6239-K07A9.2"/>
<dbReference type="PeptideAtlas" id="Q9TXJ0"/>
<dbReference type="EnsemblMetazoa" id="K07A9.2.1">
    <property type="protein sequence ID" value="K07A9.2.1"/>
    <property type="gene ID" value="WBGene00000553"/>
</dbReference>
<dbReference type="GeneID" id="176989"/>
<dbReference type="KEGG" id="cel:CELE_K07A9.2"/>
<dbReference type="UCSC" id="K07A9.2">
    <property type="organism name" value="c. elegans"/>
</dbReference>
<dbReference type="AGR" id="WB:WBGene00000553"/>
<dbReference type="CTD" id="176989"/>
<dbReference type="WormBase" id="K07A9.2">
    <property type="protein sequence ID" value="CE25046"/>
    <property type="gene ID" value="WBGene00000553"/>
    <property type="gene designation" value="cmk-1"/>
</dbReference>
<dbReference type="eggNOG" id="KOG0032">
    <property type="taxonomic scope" value="Eukaryota"/>
</dbReference>
<dbReference type="GeneTree" id="ENSGT00940000156378"/>
<dbReference type="HOGENOM" id="CLU_000288_63_0_1"/>
<dbReference type="InParanoid" id="Q9TXJ0"/>
<dbReference type="OMA" id="HDWFESR"/>
<dbReference type="OrthoDB" id="40902at2759"/>
<dbReference type="PhylomeDB" id="Q9TXJ0"/>
<dbReference type="Reactome" id="R-CEL-9619229">
    <property type="pathway name" value="Activation of RAC1 downstream of NMDARs"/>
</dbReference>
<dbReference type="SABIO-RK" id="Q9TXJ0"/>
<dbReference type="SignaLink" id="Q9TXJ0"/>
<dbReference type="PRO" id="PR:Q9TXJ0"/>
<dbReference type="Proteomes" id="UP000001940">
    <property type="component" value="Chromosome IV"/>
</dbReference>
<dbReference type="Bgee" id="WBGene00000553">
    <property type="expression patterns" value="Expressed in pharyngeal muscle cell (C elegans) and 3 other cell types or tissues"/>
</dbReference>
<dbReference type="GO" id="GO:0005737">
    <property type="term" value="C:cytoplasm"/>
    <property type="evidence" value="ECO:0000314"/>
    <property type="project" value="WormBase"/>
</dbReference>
<dbReference type="GO" id="GO:0005634">
    <property type="term" value="C:nucleus"/>
    <property type="evidence" value="ECO:0000314"/>
    <property type="project" value="WormBase"/>
</dbReference>
<dbReference type="GO" id="GO:0005524">
    <property type="term" value="F:ATP binding"/>
    <property type="evidence" value="ECO:0007669"/>
    <property type="project" value="UniProtKB-KW"/>
</dbReference>
<dbReference type="GO" id="GO:0004683">
    <property type="term" value="F:calcium/calmodulin-dependent protein kinase activity"/>
    <property type="evidence" value="ECO:0000314"/>
    <property type="project" value="WormBase"/>
</dbReference>
<dbReference type="GO" id="GO:0005516">
    <property type="term" value="F:calmodulin binding"/>
    <property type="evidence" value="ECO:0000314"/>
    <property type="project" value="WormBase"/>
</dbReference>
<dbReference type="GO" id="GO:0046872">
    <property type="term" value="F:metal ion binding"/>
    <property type="evidence" value="ECO:0007669"/>
    <property type="project" value="UniProtKB-KW"/>
</dbReference>
<dbReference type="GO" id="GO:0106310">
    <property type="term" value="F:protein serine kinase activity"/>
    <property type="evidence" value="ECO:0007669"/>
    <property type="project" value="RHEA"/>
</dbReference>
<dbReference type="GO" id="GO:0048812">
    <property type="term" value="P:neuron projection morphogenesis"/>
    <property type="evidence" value="ECO:0000315"/>
    <property type="project" value="WormBase"/>
</dbReference>
<dbReference type="GO" id="GO:0045944">
    <property type="term" value="P:positive regulation of transcription by RNA polymerase II"/>
    <property type="evidence" value="ECO:0000315"/>
    <property type="project" value="WormBase"/>
</dbReference>
<dbReference type="GO" id="GO:0045664">
    <property type="term" value="P:regulation of neuron differentiation"/>
    <property type="evidence" value="ECO:0000315"/>
    <property type="project" value="WormBase"/>
</dbReference>
<dbReference type="GO" id="GO:0007165">
    <property type="term" value="P:signal transduction"/>
    <property type="evidence" value="ECO:0000318"/>
    <property type="project" value="GO_Central"/>
</dbReference>
<dbReference type="GO" id="GO:0040040">
    <property type="term" value="P:thermosensory behavior"/>
    <property type="evidence" value="ECO:0000315"/>
    <property type="project" value="WormBase"/>
</dbReference>
<dbReference type="CDD" id="cd14083">
    <property type="entry name" value="STKc_CaMKI"/>
    <property type="match status" value="1"/>
</dbReference>
<dbReference type="FunFam" id="3.30.200.20:FF:000531">
    <property type="entry name" value="Calcium/calmodulin-dependent protein kinase type"/>
    <property type="match status" value="1"/>
</dbReference>
<dbReference type="FunFam" id="1.10.510.10:FF:000026">
    <property type="entry name" value="Calcium/calmodulin-dependent protein kinase type 1"/>
    <property type="match status" value="1"/>
</dbReference>
<dbReference type="Gene3D" id="3.30.200.20">
    <property type="entry name" value="Phosphorylase Kinase, domain 1"/>
    <property type="match status" value="1"/>
</dbReference>
<dbReference type="Gene3D" id="1.10.510.10">
    <property type="entry name" value="Transferase(Phosphotransferase) domain 1"/>
    <property type="match status" value="1"/>
</dbReference>
<dbReference type="InterPro" id="IPR011009">
    <property type="entry name" value="Kinase-like_dom_sf"/>
</dbReference>
<dbReference type="InterPro" id="IPR000719">
    <property type="entry name" value="Prot_kinase_dom"/>
</dbReference>
<dbReference type="InterPro" id="IPR017441">
    <property type="entry name" value="Protein_kinase_ATP_BS"/>
</dbReference>
<dbReference type="InterPro" id="IPR008271">
    <property type="entry name" value="Ser/Thr_kinase_AS"/>
</dbReference>
<dbReference type="PANTHER" id="PTHR24347">
    <property type="entry name" value="SERINE/THREONINE-PROTEIN KINASE"/>
    <property type="match status" value="1"/>
</dbReference>
<dbReference type="Pfam" id="PF00069">
    <property type="entry name" value="Pkinase"/>
    <property type="match status" value="1"/>
</dbReference>
<dbReference type="SMART" id="SM00220">
    <property type="entry name" value="S_TKc"/>
    <property type="match status" value="1"/>
</dbReference>
<dbReference type="SUPFAM" id="SSF56112">
    <property type="entry name" value="Protein kinase-like (PK-like)"/>
    <property type="match status" value="1"/>
</dbReference>
<dbReference type="PROSITE" id="PS00107">
    <property type="entry name" value="PROTEIN_KINASE_ATP"/>
    <property type="match status" value="1"/>
</dbReference>
<dbReference type="PROSITE" id="PS50011">
    <property type="entry name" value="PROTEIN_KINASE_DOM"/>
    <property type="match status" value="1"/>
</dbReference>
<dbReference type="PROSITE" id="PS00108">
    <property type="entry name" value="PROTEIN_KINASE_ST"/>
    <property type="match status" value="1"/>
</dbReference>
<protein>
    <recommendedName>
        <fullName evidence="21">Calcium/calmodulin-dependent protein kinase type 1</fullName>
        <ecNumber evidence="7 8 13">2.7.11.17</ecNumber>
    </recommendedName>
    <alternativeName>
        <fullName evidence="21">CaM kinase I</fullName>
        <shortName evidence="21">CaM-KI</shortName>
    </alternativeName>
</protein>
<reference evidence="22 24" key="1">
    <citation type="journal article" date="1999" name="J. Biol. Chem.">
        <title>Ca(2+)/Calmodulin-dependent protein kinase cascade in Caenorhabditis elegans. Implication in transcriptional activation.</title>
        <authorList>
            <person name="Eto K."/>
            <person name="Takahashi N."/>
            <person name="Kimura Y."/>
            <person name="Masuho Y."/>
            <person name="Arai K."/>
            <person name="Muramatsu M.A."/>
            <person name="Tokumitsu H."/>
        </authorList>
    </citation>
    <scope>NUCLEOTIDE SEQUENCE [MRNA]</scope>
    <scope>FUNCTION</scope>
    <scope>COFACTOR</scope>
    <scope>BINDING TO CALMODULIN</scope>
    <scope>ACTIVITY REGULATION</scope>
    <scope>BIOPHYSICOCHEMICAL PROPERTIES</scope>
    <scope>SUBCELLULAR LOCATION</scope>
    <scope>DISRUPTION PHENOTYPE</scope>
    <scope>PHOSPHORYLATION AT THR-179</scope>
    <scope>MUTAGENESIS OF 2-PRO--ARG-7 AND THR-179</scope>
    <source>
        <strain evidence="24">Bristol N2</strain>
        <tissue evidence="24">Embryo</tissue>
    </source>
</reference>
<reference key="2">
    <citation type="journal article" date="1998" name="Science">
        <title>Genome sequence of the nematode C. elegans: a platform for investigating biology.</title>
        <authorList>
            <consortium name="The C. elegans sequencing consortium"/>
        </authorList>
    </citation>
    <scope>NUCLEOTIDE SEQUENCE [LARGE SCALE GENOMIC DNA]</scope>
    <source>
        <strain>Bristol N2</strain>
    </source>
</reference>
<reference evidence="22 23" key="3">
    <citation type="journal article" date="2004" name="Curr. Biol.">
        <title>The CMK-1 CaMKI and the TAX-4 Cyclic nucleotide-gated channel regulate thermosensory neuron gene expression and function in C. elegans.</title>
        <authorList>
            <person name="Satterlee J.S."/>
            <person name="Ryu W.S."/>
            <person name="Sengupta P."/>
        </authorList>
    </citation>
    <scope>NUCLEOTIDE SEQUENCE [MRNA] OF 17-348</scope>
    <scope>FUNCTION</scope>
    <scope>DISRUPTION PHENOTYPE</scope>
    <scope>MUTAGENESIS OF THR-179</scope>
</reference>
<reference evidence="22" key="4">
    <citation type="journal article" date="2002" name="EMBO Rep.">
        <title>A CaMK cascade activates CRE-mediated transcription in neurons of Caenorhabditis elegans.</title>
        <authorList>
            <person name="Kimura Y."/>
            <person name="Corcoran E.E."/>
            <person name="Eto K."/>
            <person name="Gengyo-Ando K."/>
            <person name="Muramatsu M.A."/>
            <person name="Kobayashi R."/>
            <person name="Freedman J.H."/>
            <person name="Mitani S."/>
            <person name="Hagiwara M."/>
            <person name="Means A.R."/>
            <person name="Tokumitsu H."/>
        </authorList>
    </citation>
    <scope>FUNCTION</scope>
    <scope>COFACTOR</scope>
    <scope>TISSUE SPECIFICITY</scope>
</reference>
<reference key="5">
    <citation type="journal article" date="2014" name="Neuron">
        <title>CaMKI-dependent regulation of sensory gene expression mediates experience-dependent plasticity in the operating range of a thermosensory neuron.</title>
        <authorList>
            <person name="Yu Y.V."/>
            <person name="Bell H.W."/>
            <person name="Glauser D.A."/>
            <person name="Van Hooser S.D."/>
            <person name="Goodman M.B."/>
            <person name="Sengupta P."/>
        </authorList>
    </citation>
    <scope>FUNCTION</scope>
    <scope>SUBCELLULAR LOCATION</scope>
    <scope>DISRUPTION PHENOTYPE</scope>
    <scope>MUTAGENESIS OF THR-179</scope>
</reference>
<reference key="6">
    <citation type="journal article" date="2014" name="Neuron">
        <title>The balance between cytoplasmic and nuclear CaM kinase-1 signaling controls the operating range of noxious heat avoidance.</title>
        <authorList>
            <person name="Schild L.C."/>
            <person name="Zbinden L."/>
            <person name="Bell H.W."/>
            <person name="Yu Y.V."/>
            <person name="Sengupta P."/>
            <person name="Goodman M.B."/>
            <person name="Glauser D.A."/>
        </authorList>
    </citation>
    <scope>FUNCTION</scope>
    <scope>SUBCELLULAR LOCATION</scope>
    <scope>TISSUE SPECIFICITY</scope>
    <scope>DISRUPTION PHENOTYPE</scope>
    <scope>MUTAGENESIS OF LYS-52 AND THR-179</scope>
</reference>
<reference key="7">
    <citation type="journal article" date="2015" name="Elife">
        <title>Feeding state-dependent regulation of developmental plasticity via CaMKI and neuroendocrine signaling.</title>
        <authorList>
            <person name="Neal S.J."/>
            <person name="Takeishi A."/>
            <person name="O'Donnell M.P."/>
            <person name="Park J."/>
            <person name="Hong M."/>
            <person name="Butcher R.A."/>
            <person name="Kim K."/>
            <person name="Sengupta P."/>
        </authorList>
    </citation>
    <scope>FUNCTION</scope>
    <scope>SUBCELLULAR LOCATION</scope>
    <scope>DISRUPTION PHENOTYPE</scope>
</reference>
<reference key="8">
    <citation type="journal article" date="2016" name="Cell Rep.">
        <title>Single-cell memory regulates a neural circuit for sensory behavior.</title>
        <authorList>
            <person name="Kobayashi K."/>
            <person name="Nakano S."/>
            <person name="Amano M."/>
            <person name="Tsuboi D."/>
            <person name="Nishioka T."/>
            <person name="Ikeda S."/>
            <person name="Yokoyama G."/>
            <person name="Kaibuchi K."/>
            <person name="Mori I."/>
        </authorList>
    </citation>
    <scope>FUNCTION</scope>
    <scope>CATALYTIC ACTIVITY</scope>
    <scope>ACTIVITY REGULATION</scope>
    <scope>DISRUPTION PHENOTYPE</scope>
    <scope>MUTAGENESIS OF LYS-52</scope>
</reference>
<reference key="9">
    <citation type="journal article" date="2016" name="J. Biol. Chem.">
        <title>The signaling pathway of Caenorhabditis elegans mediates chemotaxis response to the attractant 2-heptanone in a Trojan horse-like pathogenesis.</title>
        <authorList>
            <person name="Zhang C."/>
            <person name="Zhao N."/>
            <person name="Chen Y."/>
            <person name="Zhang D."/>
            <person name="Yan J."/>
            <person name="Zou W."/>
            <person name="Zhang K."/>
            <person name="Huang X."/>
        </authorList>
    </citation>
    <scope>FUNCTION</scope>
</reference>
<reference key="10">
    <citation type="journal article" date="2016" name="PLoS Genet.">
        <title>The CaM kinase CMK-1 mediates a negative feedback mechanism coupling the C. elegans glutamate receptor GLR-1 with its own transcription.</title>
        <authorList>
            <person name="Moss B.J."/>
            <person name="Park L."/>
            <person name="Dahlberg C.L."/>
            <person name="Juo P."/>
        </authorList>
    </citation>
    <scope>FUNCTION</scope>
    <scope>SUBCELLULAR LOCATION</scope>
    <scope>DISRUPTION PHENOTYPE</scope>
    <scope>MUTAGENESIS OF LYS-52</scope>
</reference>
<reference evidence="22" key="11">
    <citation type="journal article" date="2018" name="J. Neurosci.">
        <title>Loss of CaMKI Function Disrupts Salt Aversive Learning in C. elegans.</title>
        <authorList>
            <person name="Lim J.P."/>
            <person name="Fehlauer H."/>
            <person name="Das A."/>
            <person name="Saro G."/>
            <person name="Glauser D.A."/>
            <person name="Brunet A."/>
            <person name="Goodman M.B."/>
        </authorList>
    </citation>
    <scope>FUNCTION</scope>
    <scope>SUBCELLULAR LOCATION</scope>
    <scope>TISSUE SPECIFICITY</scope>
    <scope>DISRUPTION PHENOTYPE</scope>
    <scope>MUTAGENESIS OF LYS-52 AND THR-179</scope>
</reference>
<reference evidence="22" key="12">
    <citation type="journal article" date="2018" name="Proc. R. Soc. B">
        <title>Insights into the roles of CMK-1 and OGT-1 in interstimulus interval-dependent habituation in Caenorhabditis elegans.</title>
        <authorList>
            <person name="Ardiel E.L."/>
            <person name="McDiarmid T.A."/>
            <person name="Timbers T.A."/>
            <person name="Lee K.C.Y."/>
            <person name="Safaei J."/>
            <person name="Pelech S.L."/>
            <person name="Rankin C.H."/>
        </authorList>
    </citation>
    <scope>FUNCTION</scope>
    <scope>TISSUE SPECIFICITY</scope>
    <scope>DISRUPTION PHENOTYPE</scope>
    <scope>MUTAGENESIS OF 127-GLN--ALA-348 AND THR-179</scope>
</reference>
<reference key="13">
    <citation type="journal article" date="2019" name="PLoS Genet.">
        <title>Myoinhibitory peptide signaling modulates aversive gustatory learning in Caenorhabditis elegans.</title>
        <authorList>
            <person name="Peymen K."/>
            <person name="Watteyne J."/>
            <person name="Borghgraef C."/>
            <person name="Van Sinay E."/>
            <person name="Beets I."/>
            <person name="Schoofs L."/>
        </authorList>
    </citation>
    <scope>FUNCTION</scope>
</reference>
<reference evidence="22" key="14">
    <citation type="journal article" date="2021" name="Elife">
        <title>Ca2+/CaM binding to CaMKI promotes IMA-3 importin binding and nuclear translocation in sensory neurons to control behavioral adaptation.</title>
        <authorList>
            <person name="Ippolito D."/>
            <person name="Thapliyal S."/>
            <person name="Glauser D.A."/>
        </authorList>
    </citation>
    <scope>FUNCTION</scope>
    <scope>INTERACTION WITH IMA-3</scope>
    <scope>SUBCELLULAR LOCATION</scope>
    <scope>TISSUE SPECIFICITY</scope>
    <scope>DOMAIN</scope>
    <scope>DISRUPTION PHENOTYPE</scope>
    <scope>MUTAGENESIS OF LYS-71; ARG-74; ARG-77; 127-GLN--ALA-348; 288-ILE--VAL-294; VAL-292; VAL-294; LYS-302; TRP-305; LYS-307; 315-ILE--LEU-323; ILE-315; 318-LEU--SER-324; LEU-321 AND LEU-323</scope>
</reference>
<reference evidence="22" key="15">
    <citation type="journal article" date="2023" name="Elife">
        <title>Multiple antagonist calcium-dependent mechanisms control CaM kinase-1 subcellular localization in a C. elegans thermal nociceptor.</title>
        <authorList>
            <person name="Ippolito D."/>
            <person name="Glauser D.A."/>
        </authorList>
    </citation>
    <scope>FUNCTION</scope>
    <scope>SUBCELLULAR LOCATION</scope>
    <scope>TISSUE SPECIFICITY</scope>
    <scope>PHOSPHORYLATION AT THR-179</scope>
    <scope>MUTAGENESIS OF THR-179; TRP-305 AND SER-325</scope>
</reference>
<keyword id="KW-0021">Allosteric enzyme</keyword>
<keyword id="KW-0067">ATP-binding</keyword>
<keyword id="KW-0112">Calmodulin-binding</keyword>
<keyword id="KW-0963">Cytoplasm</keyword>
<keyword id="KW-0217">Developmental protein</keyword>
<keyword id="KW-0418">Kinase</keyword>
<keyword id="KW-0460">Magnesium</keyword>
<keyword id="KW-0479">Metal-binding</keyword>
<keyword id="KW-0547">Nucleotide-binding</keyword>
<keyword id="KW-0539">Nucleus</keyword>
<keyword id="KW-0597">Phosphoprotein</keyword>
<keyword id="KW-1185">Reference proteome</keyword>
<keyword id="KW-0723">Serine/threonine-protein kinase</keyword>
<keyword id="KW-0808">Transferase</keyword>
<organism>
    <name type="scientific">Caenorhabditis elegans</name>
    <dbReference type="NCBI Taxonomy" id="6239"/>
    <lineage>
        <taxon>Eukaryota</taxon>
        <taxon>Metazoa</taxon>
        <taxon>Ecdysozoa</taxon>
        <taxon>Nematoda</taxon>
        <taxon>Chromadorea</taxon>
        <taxon>Rhabditida</taxon>
        <taxon>Rhabditina</taxon>
        <taxon>Rhabditomorpha</taxon>
        <taxon>Rhabditoidea</taxon>
        <taxon>Rhabditidae</taxon>
        <taxon>Peloderinae</taxon>
        <taxon>Caenorhabditis</taxon>
    </lineage>
</organism>